<name>PANB_PARPJ</name>
<feature type="chain" id="PRO_1000096947" description="3-methyl-2-oxobutanoate hydroxymethyltransferase">
    <location>
        <begin position="1"/>
        <end position="271"/>
    </location>
</feature>
<feature type="active site" description="Proton acceptor" evidence="1">
    <location>
        <position position="189"/>
    </location>
</feature>
<feature type="binding site" evidence="1">
    <location>
        <begin position="53"/>
        <end position="54"/>
    </location>
    <ligand>
        <name>3-methyl-2-oxobutanoate</name>
        <dbReference type="ChEBI" id="CHEBI:11851"/>
    </ligand>
</feature>
<feature type="binding site" evidence="1">
    <location>
        <position position="53"/>
    </location>
    <ligand>
        <name>Mg(2+)</name>
        <dbReference type="ChEBI" id="CHEBI:18420"/>
    </ligand>
</feature>
<feature type="binding site" evidence="1">
    <location>
        <position position="92"/>
    </location>
    <ligand>
        <name>3-methyl-2-oxobutanoate</name>
        <dbReference type="ChEBI" id="CHEBI:11851"/>
    </ligand>
</feature>
<feature type="binding site" evidence="1">
    <location>
        <position position="92"/>
    </location>
    <ligand>
        <name>Mg(2+)</name>
        <dbReference type="ChEBI" id="CHEBI:18420"/>
    </ligand>
</feature>
<feature type="binding site" evidence="1">
    <location>
        <position position="120"/>
    </location>
    <ligand>
        <name>3-methyl-2-oxobutanoate</name>
        <dbReference type="ChEBI" id="CHEBI:11851"/>
    </ligand>
</feature>
<feature type="binding site" evidence="1">
    <location>
        <position position="122"/>
    </location>
    <ligand>
        <name>Mg(2+)</name>
        <dbReference type="ChEBI" id="CHEBI:18420"/>
    </ligand>
</feature>
<protein>
    <recommendedName>
        <fullName evidence="1">3-methyl-2-oxobutanoate hydroxymethyltransferase</fullName>
        <ecNumber evidence="1">2.1.2.11</ecNumber>
    </recommendedName>
    <alternativeName>
        <fullName evidence="1">Ketopantoate hydroxymethyltransferase</fullName>
        <shortName evidence="1">KPHMT</shortName>
    </alternativeName>
</protein>
<sequence>MTYLQEASRNAITVPKLQAMRDAGEKIAMLTCYDASFAALLDRAGVDVLLIGDSLGNVLQGQTTTLPVSLADIAYHTASVARARPAALIVADLPFGTYGTPEDAFRSSVELMRAGAQMVKLEGGEWLADTVRFLVERSIPVCAHVGLTPQSVHAFGGFKVQGKTEAGATQLMRDSLAVQQAGAQLIVMEAIPTLLASDVTKQLRIPTIGIGAGLDCSGQVLVLHDMLGIFPGKRPRFVKDFMHGQPSILAAVEAYVAAVKDGSFPGPEHTF</sequence>
<proteinExistence type="inferred from homology"/>
<organism>
    <name type="scientific">Paraburkholderia phytofirmans (strain DSM 17436 / LMG 22146 / PsJN)</name>
    <name type="common">Burkholderia phytofirmans</name>
    <dbReference type="NCBI Taxonomy" id="398527"/>
    <lineage>
        <taxon>Bacteria</taxon>
        <taxon>Pseudomonadati</taxon>
        <taxon>Pseudomonadota</taxon>
        <taxon>Betaproteobacteria</taxon>
        <taxon>Burkholderiales</taxon>
        <taxon>Burkholderiaceae</taxon>
        <taxon>Paraburkholderia</taxon>
    </lineage>
</organism>
<gene>
    <name evidence="1" type="primary">panB</name>
    <name type="ordered locus">Bphyt_0741</name>
</gene>
<reference key="1">
    <citation type="journal article" date="2011" name="J. Bacteriol.">
        <title>Complete genome sequence of the plant growth-promoting endophyte Burkholderia phytofirmans strain PsJN.</title>
        <authorList>
            <person name="Weilharter A."/>
            <person name="Mitter B."/>
            <person name="Shin M.V."/>
            <person name="Chain P.S."/>
            <person name="Nowak J."/>
            <person name="Sessitsch A."/>
        </authorList>
    </citation>
    <scope>NUCLEOTIDE SEQUENCE [LARGE SCALE GENOMIC DNA]</scope>
    <source>
        <strain>DSM 17436 / LMG 22146 / PsJN</strain>
    </source>
</reference>
<dbReference type="EC" id="2.1.2.11" evidence="1"/>
<dbReference type="EMBL" id="CP001052">
    <property type="protein sequence ID" value="ACD15165.1"/>
    <property type="molecule type" value="Genomic_DNA"/>
</dbReference>
<dbReference type="RefSeq" id="WP_012431801.1">
    <property type="nucleotide sequence ID" value="NC_010681.1"/>
</dbReference>
<dbReference type="SMR" id="B2SXC3"/>
<dbReference type="STRING" id="398527.Bphyt_0741"/>
<dbReference type="KEGG" id="bpy:Bphyt_0741"/>
<dbReference type="eggNOG" id="COG0413">
    <property type="taxonomic scope" value="Bacteria"/>
</dbReference>
<dbReference type="HOGENOM" id="CLU_036645_1_0_4"/>
<dbReference type="OrthoDB" id="9781789at2"/>
<dbReference type="UniPathway" id="UPA00028">
    <property type="reaction ID" value="UER00003"/>
</dbReference>
<dbReference type="Proteomes" id="UP000001739">
    <property type="component" value="Chromosome 1"/>
</dbReference>
<dbReference type="GO" id="GO:0005737">
    <property type="term" value="C:cytoplasm"/>
    <property type="evidence" value="ECO:0007669"/>
    <property type="project" value="UniProtKB-SubCell"/>
</dbReference>
<dbReference type="GO" id="GO:0003864">
    <property type="term" value="F:3-methyl-2-oxobutanoate hydroxymethyltransferase activity"/>
    <property type="evidence" value="ECO:0007669"/>
    <property type="project" value="UniProtKB-UniRule"/>
</dbReference>
<dbReference type="GO" id="GO:0000287">
    <property type="term" value="F:magnesium ion binding"/>
    <property type="evidence" value="ECO:0007669"/>
    <property type="project" value="TreeGrafter"/>
</dbReference>
<dbReference type="GO" id="GO:0015940">
    <property type="term" value="P:pantothenate biosynthetic process"/>
    <property type="evidence" value="ECO:0007669"/>
    <property type="project" value="UniProtKB-UniRule"/>
</dbReference>
<dbReference type="CDD" id="cd06557">
    <property type="entry name" value="KPHMT-like"/>
    <property type="match status" value="1"/>
</dbReference>
<dbReference type="FunFam" id="3.20.20.60:FF:000003">
    <property type="entry name" value="3-methyl-2-oxobutanoate hydroxymethyltransferase"/>
    <property type="match status" value="1"/>
</dbReference>
<dbReference type="Gene3D" id="3.20.20.60">
    <property type="entry name" value="Phosphoenolpyruvate-binding domains"/>
    <property type="match status" value="1"/>
</dbReference>
<dbReference type="HAMAP" id="MF_00156">
    <property type="entry name" value="PanB"/>
    <property type="match status" value="1"/>
</dbReference>
<dbReference type="InterPro" id="IPR003700">
    <property type="entry name" value="Pantoate_hydroxy_MeTrfase"/>
</dbReference>
<dbReference type="InterPro" id="IPR015813">
    <property type="entry name" value="Pyrv/PenolPyrv_kinase-like_dom"/>
</dbReference>
<dbReference type="InterPro" id="IPR040442">
    <property type="entry name" value="Pyrv_kinase-like_dom_sf"/>
</dbReference>
<dbReference type="NCBIfam" id="TIGR00222">
    <property type="entry name" value="panB"/>
    <property type="match status" value="1"/>
</dbReference>
<dbReference type="NCBIfam" id="NF001452">
    <property type="entry name" value="PRK00311.1"/>
    <property type="match status" value="1"/>
</dbReference>
<dbReference type="PANTHER" id="PTHR20881">
    <property type="entry name" value="3-METHYL-2-OXOBUTANOATE HYDROXYMETHYLTRANSFERASE"/>
    <property type="match status" value="1"/>
</dbReference>
<dbReference type="PANTHER" id="PTHR20881:SF0">
    <property type="entry name" value="3-METHYL-2-OXOBUTANOATE HYDROXYMETHYLTRANSFERASE"/>
    <property type="match status" value="1"/>
</dbReference>
<dbReference type="Pfam" id="PF02548">
    <property type="entry name" value="Pantoate_transf"/>
    <property type="match status" value="1"/>
</dbReference>
<dbReference type="PIRSF" id="PIRSF000388">
    <property type="entry name" value="Pantoate_hydroxy_MeTrfase"/>
    <property type="match status" value="1"/>
</dbReference>
<dbReference type="SUPFAM" id="SSF51621">
    <property type="entry name" value="Phosphoenolpyruvate/pyruvate domain"/>
    <property type="match status" value="1"/>
</dbReference>
<evidence type="ECO:0000255" key="1">
    <source>
        <dbReference type="HAMAP-Rule" id="MF_00156"/>
    </source>
</evidence>
<accession>B2SXC3</accession>
<keyword id="KW-0963">Cytoplasm</keyword>
<keyword id="KW-0460">Magnesium</keyword>
<keyword id="KW-0479">Metal-binding</keyword>
<keyword id="KW-0566">Pantothenate biosynthesis</keyword>
<keyword id="KW-0808">Transferase</keyword>
<comment type="function">
    <text evidence="1">Catalyzes the reversible reaction in which hydroxymethyl group from 5,10-methylenetetrahydrofolate is transferred onto alpha-ketoisovalerate to form ketopantoate.</text>
</comment>
<comment type="catalytic activity">
    <reaction evidence="1">
        <text>3-methyl-2-oxobutanoate + (6R)-5,10-methylene-5,6,7,8-tetrahydrofolate + H2O = 2-dehydropantoate + (6S)-5,6,7,8-tetrahydrofolate</text>
        <dbReference type="Rhea" id="RHEA:11824"/>
        <dbReference type="ChEBI" id="CHEBI:11561"/>
        <dbReference type="ChEBI" id="CHEBI:11851"/>
        <dbReference type="ChEBI" id="CHEBI:15377"/>
        <dbReference type="ChEBI" id="CHEBI:15636"/>
        <dbReference type="ChEBI" id="CHEBI:57453"/>
        <dbReference type="EC" id="2.1.2.11"/>
    </reaction>
</comment>
<comment type="cofactor">
    <cofactor evidence="1">
        <name>Mg(2+)</name>
        <dbReference type="ChEBI" id="CHEBI:18420"/>
    </cofactor>
    <text evidence="1">Binds 1 Mg(2+) ion per subunit.</text>
</comment>
<comment type="pathway">
    <text evidence="1">Cofactor biosynthesis; (R)-pantothenate biosynthesis; (R)-pantoate from 3-methyl-2-oxobutanoate: step 1/2.</text>
</comment>
<comment type="subunit">
    <text evidence="1">Homodecamer; pentamer of dimers.</text>
</comment>
<comment type="subcellular location">
    <subcellularLocation>
        <location evidence="1">Cytoplasm</location>
    </subcellularLocation>
</comment>
<comment type="similarity">
    <text evidence="1">Belongs to the PanB family.</text>
</comment>